<name>NSDHL_MOUSE</name>
<gene>
    <name type="primary">Nsdhl</name>
</gene>
<proteinExistence type="evidence at protein level"/>
<reference key="1">
    <citation type="journal article" date="1999" name="Nat. Genet.">
        <title>The gene mutated in bare patches and striated mice encodes a novel 3beta-hydroxysteroid dehydrogenase.</title>
        <authorList>
            <person name="Liu X.Y."/>
            <person name="Dangel A.W."/>
            <person name="Kelley R.I."/>
            <person name="Zhao W."/>
            <person name="Denny P."/>
            <person name="Botcherby M."/>
            <person name="Cattanach B."/>
            <person name="Peters J."/>
            <person name="Hunsicker P.R."/>
            <person name="Mallon A.-M."/>
            <person name="Strivens M.A."/>
            <person name="Bate R."/>
            <person name="Miller W."/>
            <person name="Rhodes M."/>
            <person name="Brown S.D.M."/>
            <person name="Herman G.E."/>
        </authorList>
    </citation>
    <scope>NUCLEOTIDE SEQUENCE [MRNA]</scope>
    <scope>CATALYTIC ACTIVITY</scope>
    <scope>FUNCTION</scope>
    <scope>VARIANTS STR LEU-98 AND MET-109</scope>
    <scope>VARIANT BPA 103-LYS--LYS-362 DEL</scope>
</reference>
<reference key="2">
    <citation type="journal article" date="2000" name="Genome Res.">
        <title>Comparative genome sequence analysis of the Bpa/Str region in mouse and man.</title>
        <authorList>
            <person name="Mallon A.-M."/>
            <person name="Platzer M."/>
            <person name="Bate R."/>
            <person name="Gloeckner G."/>
            <person name="Botcherby M.R.M."/>
            <person name="Nordsiek G."/>
            <person name="Strivens M.A."/>
            <person name="Kioschis P."/>
            <person name="Dangel A."/>
            <person name="Cunningham D."/>
            <person name="Straw R.N.A."/>
            <person name="Weston P."/>
            <person name="Gilbert M."/>
            <person name="Fernando S."/>
            <person name="Goodall K."/>
            <person name="Hunter G."/>
            <person name="Greystrong J.S."/>
            <person name="Clarke D."/>
            <person name="Kimberley C."/>
            <person name="Goerdes M."/>
            <person name="Blechschmidt K."/>
            <person name="Rump A."/>
            <person name="Hinzmann B."/>
            <person name="Mundy C.R."/>
            <person name="Miller W."/>
            <person name="Poustka A."/>
            <person name="Herman G.E."/>
            <person name="Rhodes M."/>
            <person name="Denny P."/>
            <person name="Rosenthal A."/>
            <person name="Brown S.D.M."/>
        </authorList>
    </citation>
    <scope>NUCLEOTIDE SEQUENCE [LARGE SCALE GENOMIC DNA]</scope>
    <source>
        <strain>C57BL/6J</strain>
    </source>
</reference>
<reference key="3">
    <citation type="journal article" date="2003" name="Hum. Mol. Genet.">
        <title>NSDHL, an enzyme involved in cholesterol biosynthesis, traffics through the Golgi and accumulates on ER membranes and on the surface of lipid droplets.</title>
        <authorList>
            <person name="Caldas H."/>
            <person name="Herman G.E."/>
        </authorList>
    </citation>
    <scope>SUBCELLULAR LOCATION</scope>
    <scope>ER RETENTION MOTIF</scope>
</reference>
<reference key="4">
    <citation type="journal article" date="2003" name="Mol. Genet. Metab.">
        <title>Identification of two novel mutations in the murine Nsdhl sterol dehydrogenase gene and development of a functional complementation assay in yeast.</title>
        <authorList>
            <person name="Lucas M.E."/>
            <person name="Ma Q."/>
            <person name="Cunningham D."/>
            <person name="Peters J."/>
            <person name="Cattanach B."/>
            <person name="Bard M."/>
            <person name="Elmore B.K."/>
            <person name="Herman G.E."/>
        </authorList>
    </citation>
    <scope>CATALYTIC ACTIVITY</scope>
    <scope>FUNCTION</scope>
    <scope>VARIANTS BPA ASP-53 AND THR-94</scope>
    <scope>CHARACTERIZATION OF VARIANTS BPA ASP-53 AND THR-94</scope>
    <scope>CHARACTERIZATION OF VARIANTS STR LEU-98 AND MET-109</scope>
</reference>
<reference key="5">
    <citation type="journal article" date="2010" name="Cell">
        <title>A tissue-specific atlas of mouse protein phosphorylation and expression.</title>
        <authorList>
            <person name="Huttlin E.L."/>
            <person name="Jedrychowski M.P."/>
            <person name="Elias J.E."/>
            <person name="Goswami T."/>
            <person name="Rad R."/>
            <person name="Beausoleil S.A."/>
            <person name="Villen J."/>
            <person name="Haas W."/>
            <person name="Sowa M.E."/>
            <person name="Gygi S.P."/>
        </authorList>
    </citation>
    <scope>IDENTIFICATION BY MASS SPECTROMETRY [LARGE SCALE ANALYSIS]</scope>
    <source>
        <tissue>Brain</tissue>
        <tissue>Brown adipose tissue</tissue>
        <tissue>Kidney</tissue>
        <tissue>Liver</tissue>
        <tissue>Lung</tissue>
        <tissue>Pancreas</tissue>
        <tissue>Spleen</tissue>
        <tissue>Testis</tissue>
    </source>
</reference>
<reference key="6">
    <citation type="journal article" date="2013" name="Cancer Discov.">
        <title>Targeting C4-demethylating genes in the cholesterol pathway sensitizes cancer cells to EGF receptor inhibitors via increased EGF receptor degradation.</title>
        <authorList>
            <person name="Sukhanova A."/>
            <person name="Gorin A."/>
            <person name="Serebriiskii I.G."/>
            <person name="Gabitova L."/>
            <person name="Zheng H."/>
            <person name="Restifo D."/>
            <person name="Egleston B.L."/>
            <person name="Cunningham D."/>
            <person name="Bagnyukova T."/>
            <person name="Liu H."/>
            <person name="Nikonova A."/>
            <person name="Adams G.P."/>
            <person name="Zhou Y."/>
            <person name="Yang D.H."/>
            <person name="Mehra R."/>
            <person name="Burtness B."/>
            <person name="Cai K.Q."/>
            <person name="Klein-Szanto A."/>
            <person name="Kratz L.E."/>
            <person name="Kelley R.I."/>
            <person name="Weiner L.M."/>
            <person name="Herman G.E."/>
            <person name="Golemis E.A."/>
            <person name="Astsaturov I."/>
        </authorList>
    </citation>
    <scope>FUNCTION</scope>
</reference>
<accession>Q9R1J0</accession>
<accession>O55109</accession>
<evidence type="ECO:0000250" key="1">
    <source>
        <dbReference type="UniProtKB" id="Q12068"/>
    </source>
</evidence>
<evidence type="ECO:0000250" key="2">
    <source>
        <dbReference type="UniProtKB" id="Q15738"/>
    </source>
</evidence>
<evidence type="ECO:0000255" key="3"/>
<evidence type="ECO:0000269" key="4">
    <source>
    </source>
</evidence>
<evidence type="ECO:0000269" key="5">
    <source>
    </source>
</evidence>
<evidence type="ECO:0000269" key="6">
    <source>
    </source>
</evidence>
<evidence type="ECO:0000269" key="7">
    <source>
    </source>
</evidence>
<evidence type="ECO:0000305" key="8"/>
<evidence type="ECO:0000305" key="9">
    <source>
    </source>
</evidence>
<evidence type="ECO:0000305" key="10">
    <source>
    </source>
</evidence>
<dbReference type="EC" id="1.1.1.170" evidence="4 6"/>
<dbReference type="EMBL" id="AF100198">
    <property type="protein sequence ID" value="AAD38448.1"/>
    <property type="molecule type" value="mRNA"/>
</dbReference>
<dbReference type="EMBL" id="AL021127">
    <property type="protein sequence ID" value="CAA15948.2"/>
    <property type="molecule type" value="Genomic_DNA"/>
</dbReference>
<dbReference type="CCDS" id="CCDS30190.1"/>
<dbReference type="RefSeq" id="NP_035071.3">
    <property type="nucleotide sequence ID" value="NM_010941.3"/>
</dbReference>
<dbReference type="SMR" id="Q9R1J0"/>
<dbReference type="BioGRID" id="201856">
    <property type="interactions" value="7"/>
</dbReference>
<dbReference type="FunCoup" id="Q9R1J0">
    <property type="interactions" value="675"/>
</dbReference>
<dbReference type="STRING" id="10090.ENSMUSP00000033715"/>
<dbReference type="SwissLipids" id="SLP:000001303"/>
<dbReference type="iPTMnet" id="Q9R1J0"/>
<dbReference type="PhosphoSitePlus" id="Q9R1J0"/>
<dbReference type="SwissPalm" id="Q9R1J0"/>
<dbReference type="jPOST" id="Q9R1J0"/>
<dbReference type="PaxDb" id="10090-ENSMUSP00000033715"/>
<dbReference type="ProteomicsDB" id="253019"/>
<dbReference type="Pumba" id="Q9R1J0"/>
<dbReference type="Antibodypedia" id="349">
    <property type="antibodies" value="141 antibodies from 25 providers"/>
</dbReference>
<dbReference type="DNASU" id="18194"/>
<dbReference type="Ensembl" id="ENSMUST00000033715.5">
    <property type="protein sequence ID" value="ENSMUSP00000033715.5"/>
    <property type="gene ID" value="ENSMUSG00000031349.5"/>
</dbReference>
<dbReference type="GeneID" id="18194"/>
<dbReference type="KEGG" id="mmu:18194"/>
<dbReference type="UCSC" id="uc009tkv.1">
    <property type="organism name" value="mouse"/>
</dbReference>
<dbReference type="AGR" id="MGI:1099438"/>
<dbReference type="CTD" id="50814"/>
<dbReference type="MGI" id="MGI:1099438">
    <property type="gene designation" value="Nsdhl"/>
</dbReference>
<dbReference type="VEuPathDB" id="HostDB:ENSMUSG00000031349"/>
<dbReference type="eggNOG" id="KOG1430">
    <property type="taxonomic scope" value="Eukaryota"/>
</dbReference>
<dbReference type="GeneTree" id="ENSGT00940000158229"/>
<dbReference type="HOGENOM" id="CLU_007383_6_8_1"/>
<dbReference type="InParanoid" id="Q9R1J0"/>
<dbReference type="OMA" id="STAHWFD"/>
<dbReference type="OrthoDB" id="10262413at2759"/>
<dbReference type="PhylomeDB" id="Q9R1J0"/>
<dbReference type="TreeFam" id="TF354279"/>
<dbReference type="BRENDA" id="1.1.1.170">
    <property type="organism ID" value="3474"/>
</dbReference>
<dbReference type="Reactome" id="R-MMU-191273">
    <property type="pathway name" value="Cholesterol biosynthesis"/>
</dbReference>
<dbReference type="UniPathway" id="UPA00770">
    <property type="reaction ID" value="UER00757"/>
</dbReference>
<dbReference type="BioGRID-ORCS" id="18194">
    <property type="hits" value="8 hits in 81 CRISPR screens"/>
</dbReference>
<dbReference type="ChiTaRS" id="Nsdhl">
    <property type="organism name" value="mouse"/>
</dbReference>
<dbReference type="PRO" id="PR:Q9R1J0"/>
<dbReference type="Proteomes" id="UP000000589">
    <property type="component" value="Chromosome X"/>
</dbReference>
<dbReference type="RNAct" id="Q9R1J0">
    <property type="molecule type" value="protein"/>
</dbReference>
<dbReference type="Bgee" id="ENSMUSG00000031349">
    <property type="expression patterns" value="Expressed in left lobe of liver and 258 other cell types or tissues"/>
</dbReference>
<dbReference type="ExpressionAtlas" id="Q9R1J0">
    <property type="expression patterns" value="baseline and differential"/>
</dbReference>
<dbReference type="GO" id="GO:0005783">
    <property type="term" value="C:endoplasmic reticulum"/>
    <property type="evidence" value="ECO:0000314"/>
    <property type="project" value="UniProtKB"/>
</dbReference>
<dbReference type="GO" id="GO:0005789">
    <property type="term" value="C:endoplasmic reticulum membrane"/>
    <property type="evidence" value="ECO:0007669"/>
    <property type="project" value="UniProtKB-SubCell"/>
</dbReference>
<dbReference type="GO" id="GO:0005811">
    <property type="term" value="C:lipid droplet"/>
    <property type="evidence" value="ECO:0000314"/>
    <property type="project" value="UniProtKB"/>
</dbReference>
<dbReference type="GO" id="GO:0102175">
    <property type="term" value="F:3-beta-hydroxysteroid dehydrogenase (NAD+)/C4-decarboxylase activity"/>
    <property type="evidence" value="ECO:0007669"/>
    <property type="project" value="RHEA"/>
</dbReference>
<dbReference type="GO" id="GO:0006695">
    <property type="term" value="P:cholesterol biosynthetic process"/>
    <property type="evidence" value="ECO:0007669"/>
    <property type="project" value="UniProtKB-KW"/>
</dbReference>
<dbReference type="GO" id="GO:0008203">
    <property type="term" value="P:cholesterol metabolic process"/>
    <property type="evidence" value="ECO:0000315"/>
    <property type="project" value="MGI"/>
</dbReference>
<dbReference type="GO" id="GO:0001942">
    <property type="term" value="P:hair follicle development"/>
    <property type="evidence" value="ECO:0000315"/>
    <property type="project" value="MGI"/>
</dbReference>
<dbReference type="GO" id="GO:0060716">
    <property type="term" value="P:labyrinthine layer blood vessel development"/>
    <property type="evidence" value="ECO:0000315"/>
    <property type="project" value="MGI"/>
</dbReference>
<dbReference type="GO" id="GO:0007224">
    <property type="term" value="P:smoothened signaling pathway"/>
    <property type="evidence" value="ECO:0000316"/>
    <property type="project" value="MGI"/>
</dbReference>
<dbReference type="CDD" id="cd09813">
    <property type="entry name" value="3b-HSD-NSDHL-like_SDR_e"/>
    <property type="match status" value="1"/>
</dbReference>
<dbReference type="FunFam" id="3.40.50.720:FF:000251">
    <property type="entry name" value="Sterol-4-alpha-carboxylate 3-dehydrogenase, decarboxylating"/>
    <property type="match status" value="1"/>
</dbReference>
<dbReference type="Gene3D" id="3.40.50.720">
    <property type="entry name" value="NAD(P)-binding Rossmann-like Domain"/>
    <property type="match status" value="1"/>
</dbReference>
<dbReference type="InterPro" id="IPR002225">
    <property type="entry name" value="3Beta_OHSteriod_DH/Estase"/>
</dbReference>
<dbReference type="InterPro" id="IPR050177">
    <property type="entry name" value="Lipid_A_modif_metabolic_enz"/>
</dbReference>
<dbReference type="InterPro" id="IPR036291">
    <property type="entry name" value="NAD(P)-bd_dom_sf"/>
</dbReference>
<dbReference type="PANTHER" id="PTHR43245">
    <property type="entry name" value="BIFUNCTIONAL POLYMYXIN RESISTANCE PROTEIN ARNA"/>
    <property type="match status" value="1"/>
</dbReference>
<dbReference type="PANTHER" id="PTHR43245:SF51">
    <property type="entry name" value="SHORT CHAIN DEHYDROGENASE_REDUCTASE FAMILY 42E, MEMBER 2"/>
    <property type="match status" value="1"/>
</dbReference>
<dbReference type="Pfam" id="PF01073">
    <property type="entry name" value="3Beta_HSD"/>
    <property type="match status" value="1"/>
</dbReference>
<dbReference type="SUPFAM" id="SSF51735">
    <property type="entry name" value="NAD(P)-binding Rossmann-fold domains"/>
    <property type="match status" value="1"/>
</dbReference>
<comment type="function">
    <text evidence="4 6 7">Catalyzes the NAD(P)(+)-dependent oxidative decarboxylation of the C4 methyl groups of 4-alpha-carboxysterols in post-squalene cholesterol biosynthesis (PubMed:10369263, PubMed:14567972). Plays a role in the regulation of the endocytic trafficking of EGFR (PubMed:23125191).</text>
</comment>
<comment type="catalytic activity">
    <reaction evidence="4 6">
        <text>a 3beta-hydroxysteroid-4alpha-carboxylate + NADP(+) = a 3-oxosteroid + CO2 + NADPH</text>
        <dbReference type="Rhea" id="RHEA:34771"/>
        <dbReference type="ChEBI" id="CHEBI:16526"/>
        <dbReference type="ChEBI" id="CHEBI:47788"/>
        <dbReference type="ChEBI" id="CHEBI:57783"/>
        <dbReference type="ChEBI" id="CHEBI:58349"/>
        <dbReference type="ChEBI" id="CHEBI:136966"/>
        <dbReference type="EC" id="1.1.1.170"/>
    </reaction>
</comment>
<comment type="catalytic activity">
    <reaction evidence="4 6">
        <text>a 3beta-hydroxysteroid-4alpha-carboxylate + NAD(+) = a 3-oxosteroid + CO2 + NADH</text>
        <dbReference type="Rhea" id="RHEA:34775"/>
        <dbReference type="ChEBI" id="CHEBI:16526"/>
        <dbReference type="ChEBI" id="CHEBI:47788"/>
        <dbReference type="ChEBI" id="CHEBI:57540"/>
        <dbReference type="ChEBI" id="CHEBI:57945"/>
        <dbReference type="ChEBI" id="CHEBI:136966"/>
        <dbReference type="EC" id="1.1.1.170"/>
    </reaction>
</comment>
<comment type="catalytic activity">
    <reaction evidence="4 6">
        <text>4alpha-carboxyzymosterol + NADP(+) = zymosterone + CO2 + NADPH</text>
        <dbReference type="Rhea" id="RHEA:33455"/>
        <dbReference type="ChEBI" id="CHEBI:16526"/>
        <dbReference type="ChEBI" id="CHEBI:52386"/>
        <dbReference type="ChEBI" id="CHEBI:57783"/>
        <dbReference type="ChEBI" id="CHEBI:58349"/>
        <dbReference type="ChEBI" id="CHEBI:143575"/>
    </reaction>
    <physiologicalReaction direction="left-to-right" evidence="9 10">
        <dbReference type="Rhea" id="RHEA:33456"/>
    </physiologicalReaction>
</comment>
<comment type="catalytic activity">
    <reaction evidence="4 6">
        <text>4alpha-carboxy-4beta-methyl-5alpha-cholest-8-en-3beta-ol + NADP(+) = 4alpha-methyl-5alpha-cholest-8-en-3-one + CO2 + NADPH</text>
        <dbReference type="Rhea" id="RHEA:46828"/>
        <dbReference type="ChEBI" id="CHEBI:16526"/>
        <dbReference type="ChEBI" id="CHEBI:57783"/>
        <dbReference type="ChEBI" id="CHEBI:58349"/>
        <dbReference type="ChEBI" id="CHEBI:87047"/>
        <dbReference type="ChEBI" id="CHEBI:87050"/>
    </reaction>
    <physiologicalReaction direction="left-to-right" evidence="9 10">
        <dbReference type="Rhea" id="RHEA:46829"/>
    </physiologicalReaction>
</comment>
<comment type="catalytic activity">
    <reaction evidence="4 6">
        <text>4alpha-carboxy-5alpha-cholest-8-ene-3beta-ol + NADP(+) = 5alpha-cholest-8-en-3-one + CO2 + NADPH</text>
        <dbReference type="Rhea" id="RHEA:46848"/>
        <dbReference type="ChEBI" id="CHEBI:16526"/>
        <dbReference type="ChEBI" id="CHEBI:57783"/>
        <dbReference type="ChEBI" id="CHEBI:58349"/>
        <dbReference type="ChEBI" id="CHEBI:87055"/>
        <dbReference type="ChEBI" id="CHEBI:87056"/>
    </reaction>
    <physiologicalReaction direction="left-to-right" evidence="9 10">
        <dbReference type="Rhea" id="RHEA:46849"/>
    </physiologicalReaction>
</comment>
<comment type="catalytic activity">
    <reaction evidence="6">
        <text>4beta-methylzymosterol-4alpha-carboxylate + NADP(+) = 3-dehydro-4-methylzymosterol + CO2 + NADPH</text>
        <dbReference type="Rhea" id="RHEA:33447"/>
        <dbReference type="ChEBI" id="CHEBI:16526"/>
        <dbReference type="ChEBI" id="CHEBI:50593"/>
        <dbReference type="ChEBI" id="CHEBI:57783"/>
        <dbReference type="ChEBI" id="CHEBI:58349"/>
        <dbReference type="ChEBI" id="CHEBI:64925"/>
        <dbReference type="EC" id="1.1.1.170"/>
    </reaction>
    <physiologicalReaction direction="left-to-right" evidence="10">
        <dbReference type="Rhea" id="RHEA:33448"/>
    </physiologicalReaction>
</comment>
<comment type="catalytic activity">
    <reaction evidence="6">
        <text>4beta-methylzymosterol-4alpha-carboxylate + NAD(+) = 3-dehydro-4-methylzymosterol + CO2 + NADH</text>
        <dbReference type="Rhea" id="RHEA:47160"/>
        <dbReference type="ChEBI" id="CHEBI:16526"/>
        <dbReference type="ChEBI" id="CHEBI:50593"/>
        <dbReference type="ChEBI" id="CHEBI:57540"/>
        <dbReference type="ChEBI" id="CHEBI:57945"/>
        <dbReference type="ChEBI" id="CHEBI:64925"/>
    </reaction>
    <physiologicalReaction direction="left-to-right" evidence="10">
        <dbReference type="Rhea" id="RHEA:47161"/>
    </physiologicalReaction>
</comment>
<comment type="catalytic activity">
    <reaction evidence="6">
        <text>4alpha-carboxy-5alpha-cholest-8-ene-3beta-ol + NAD(+) = 5alpha-cholest-8-en-3-one + CO2 + NADH</text>
        <dbReference type="Rhea" id="RHEA:47172"/>
        <dbReference type="ChEBI" id="CHEBI:16526"/>
        <dbReference type="ChEBI" id="CHEBI:57540"/>
        <dbReference type="ChEBI" id="CHEBI:57945"/>
        <dbReference type="ChEBI" id="CHEBI:87055"/>
        <dbReference type="ChEBI" id="CHEBI:87056"/>
    </reaction>
    <physiologicalReaction direction="left-to-right" evidence="10">
        <dbReference type="Rhea" id="RHEA:47173"/>
    </physiologicalReaction>
</comment>
<comment type="catalytic activity">
    <reaction evidence="6">
        <text>4alpha-carboxy-4beta-methyl-5alpha-cholest-8-en-3beta-ol + NAD(+) = 4alpha-methyl-5alpha-cholest-8-en-3-one + CO2 + NADH</text>
        <dbReference type="Rhea" id="RHEA:47168"/>
        <dbReference type="ChEBI" id="CHEBI:16526"/>
        <dbReference type="ChEBI" id="CHEBI:57540"/>
        <dbReference type="ChEBI" id="CHEBI:57945"/>
        <dbReference type="ChEBI" id="CHEBI:87047"/>
        <dbReference type="ChEBI" id="CHEBI:87050"/>
    </reaction>
    <physiologicalReaction direction="left-to-right" evidence="10">
        <dbReference type="Rhea" id="RHEA:47169"/>
    </physiologicalReaction>
</comment>
<comment type="catalytic activity">
    <reaction evidence="6">
        <text>4alpha-carboxyzymosterol + NAD(+) = zymosterone + CO2 + NADH</text>
        <dbReference type="Rhea" id="RHEA:47164"/>
        <dbReference type="ChEBI" id="CHEBI:16526"/>
        <dbReference type="ChEBI" id="CHEBI:52386"/>
        <dbReference type="ChEBI" id="CHEBI:57540"/>
        <dbReference type="ChEBI" id="CHEBI:57945"/>
        <dbReference type="ChEBI" id="CHEBI:143575"/>
    </reaction>
    <physiologicalReaction direction="left-to-right" evidence="10">
        <dbReference type="Rhea" id="RHEA:47165"/>
    </physiologicalReaction>
</comment>
<comment type="pathway">
    <text>Steroid biosynthesis; zymosterol biosynthesis; zymosterol from lanosterol: step 4/6.</text>
</comment>
<comment type="subunit">
    <text evidence="2">Homodimer.</text>
</comment>
<comment type="subcellular location">
    <subcellularLocation>
        <location evidence="5">Endoplasmic reticulum membrane</location>
        <topology evidence="3">Single-pass membrane protein</topology>
    </subcellularLocation>
    <subcellularLocation>
        <location evidence="5">Lipid droplet</location>
    </subcellularLocation>
    <text evidence="5">Trafficking through the Golgi is necessary for ER membrane localization.</text>
</comment>
<comment type="disease">
    <text evidence="4 6">Defects in Nsdhl are the cause of male-lethal mutations bare patches (Bpa) and striated (Str) phenotypes. Heterozygous Bpa females are dwarfed and demonstrate abnormal deposits of calcium in tail vertebrae. They also develop a hyperkeratotic skin eruption shortly after birth that resolves, leaving 'bare patches' arranged in a horizontal, striped pattern. The Str females are indistinguishable from normal littermates until postnatal day 12-14 when they develop striations in their coat.</text>
</comment>
<comment type="similarity">
    <text evidence="8">Belongs to the 3-beta-HSD family.</text>
</comment>
<keyword id="KW-0007">Acetylation</keyword>
<keyword id="KW-0152">Cholesterol biosynthesis</keyword>
<keyword id="KW-0153">Cholesterol metabolism</keyword>
<keyword id="KW-0225">Disease variant</keyword>
<keyword id="KW-0256">Endoplasmic reticulum</keyword>
<keyword id="KW-0444">Lipid biosynthesis</keyword>
<keyword id="KW-0551">Lipid droplet</keyword>
<keyword id="KW-0443">Lipid metabolism</keyword>
<keyword id="KW-0472">Membrane</keyword>
<keyword id="KW-0520">NAD</keyword>
<keyword id="KW-0560">Oxidoreductase</keyword>
<keyword id="KW-1185">Reference proteome</keyword>
<keyword id="KW-0752">Steroid biosynthesis</keyword>
<keyword id="KW-0753">Steroid metabolism</keyword>
<keyword id="KW-0756">Sterol biosynthesis</keyword>
<keyword id="KW-1207">Sterol metabolism</keyword>
<keyword id="KW-0812">Transmembrane</keyword>
<keyword id="KW-1133">Transmembrane helix</keyword>
<sequence length="362" mass="40686">MEQAVHGESKRGQVTGTHLTNDISKAKKCTVIGGSGFLGQHMVEQLLERGYTVNVFDIHQGFDNPRVQFFIGDLCNQQDLYPALKGVSTVFHCASPPPYSNNKELFYRVNFIGTKTVIETCREAGVQKLILTSSASVVFEGVDIKNGTEDLPYAMKPIDYYTETKILQERAVLDANDPKKNFLTAAIRPHGIFGPRDPQLVPILIDAARKGKMKFMIGNGENLVDFTFVENVVHGHILAAEHLSQDAALGGKAFHITNDEPIPFWTFLSRILTGLNYEAPKYHIPYWMAYYLAFLLSLLVMVVSPLIQIQPTFTPIRVALAGTFHYYSCEKAKKLFGYRPLVTMDEAVERTVQSFHHLRKDK</sequence>
<feature type="chain" id="PRO_0000087800" description="Sterol-4-alpha-carboxylate 3-dehydrogenase, decarboxylating">
    <location>
        <begin position="1"/>
        <end position="362"/>
    </location>
</feature>
<feature type="transmembrane region" description="Helical" evidence="3">
    <location>
        <begin position="287"/>
        <end position="307"/>
    </location>
</feature>
<feature type="short sequence motif" description="Prevents secretion from ER" evidence="5">
    <location>
        <begin position="359"/>
        <end position="362"/>
    </location>
</feature>
<feature type="active site" description="Proton acceptor" evidence="1">
    <location>
        <position position="161"/>
    </location>
</feature>
<feature type="binding site" evidence="1">
    <location>
        <position position="165"/>
    </location>
    <ligand>
        <name>NAD(+)</name>
        <dbReference type="ChEBI" id="CHEBI:57540"/>
    </ligand>
</feature>
<feature type="modified residue" description="N-acetylmethionine" evidence="2">
    <location>
        <position position="1"/>
    </location>
</feature>
<feature type="sequence variant" description="In bpa; does not rescue the yeast mutant lacking the ortholog erg26." evidence="6">
    <original>V</original>
    <variation>D</variation>
    <location>
        <position position="53"/>
    </location>
</feature>
<feature type="sequence variant" description="In bpa; does not rescue the yeast mutant lacking the ortholog erg26." evidence="6">
    <original>A</original>
    <variation>T</variation>
    <location>
        <position position="94"/>
    </location>
</feature>
<feature type="sequence variant" description="In str; does not rescue the yeast mutant lacking the ortholog erg26." evidence="4">
    <original>P</original>
    <variation>L</variation>
    <location>
        <position position="98"/>
    </location>
</feature>
<feature type="sequence variant" description="In bpa." evidence="4">
    <location>
        <begin position="103"/>
        <end position="362"/>
    </location>
</feature>
<feature type="sequence variant" description="In str; rescues the yeast mutant lacking the ortholog erg26." evidence="4">
    <original>V</original>
    <variation>M</variation>
    <location>
        <position position="109"/>
    </location>
</feature>
<protein>
    <recommendedName>
        <fullName>Sterol-4-alpha-carboxylate 3-dehydrogenase, decarboxylating</fullName>
        <ecNumber evidence="4 6">1.1.1.170</ecNumber>
    </recommendedName>
</protein>
<organism>
    <name type="scientific">Mus musculus</name>
    <name type="common">Mouse</name>
    <dbReference type="NCBI Taxonomy" id="10090"/>
    <lineage>
        <taxon>Eukaryota</taxon>
        <taxon>Metazoa</taxon>
        <taxon>Chordata</taxon>
        <taxon>Craniata</taxon>
        <taxon>Vertebrata</taxon>
        <taxon>Euteleostomi</taxon>
        <taxon>Mammalia</taxon>
        <taxon>Eutheria</taxon>
        <taxon>Euarchontoglires</taxon>
        <taxon>Glires</taxon>
        <taxon>Rodentia</taxon>
        <taxon>Myomorpha</taxon>
        <taxon>Muroidea</taxon>
        <taxon>Muridae</taxon>
        <taxon>Murinae</taxon>
        <taxon>Mus</taxon>
        <taxon>Mus</taxon>
    </lineage>
</organism>